<keyword id="KW-0004">4Fe-4S</keyword>
<keyword id="KW-0963">Cytoplasm</keyword>
<keyword id="KW-0408">Iron</keyword>
<keyword id="KW-0411">Iron-sulfur</keyword>
<keyword id="KW-0479">Metal-binding</keyword>
<keyword id="KW-1185">Reference proteome</keyword>
<keyword id="KW-0949">S-adenosyl-L-methionine</keyword>
<keyword id="KW-0808">Transferase</keyword>
<organism>
    <name type="scientific">Pseudoalteromonas translucida (strain TAC 125)</name>
    <dbReference type="NCBI Taxonomy" id="326442"/>
    <lineage>
        <taxon>Bacteria</taxon>
        <taxon>Pseudomonadati</taxon>
        <taxon>Pseudomonadota</taxon>
        <taxon>Gammaproteobacteria</taxon>
        <taxon>Alteromonadales</taxon>
        <taxon>Pseudoalteromonadaceae</taxon>
        <taxon>Pseudoalteromonas</taxon>
    </lineage>
</organism>
<sequence>MNKPVKMEPGVKLRDAAKMALIPVKVLPTEKNEMLRKPEWLKIRLPKSTERIEGIKQAMRKHGLHSVCEEASCPNLSECFNHGTATFMILGAICTRRCPFCDVAHGRPLTPDATEPEKLALTIKDMKLSYVVITSVDRDDLRDGGAQHFADCIREIRKHSPNITIEILVPDFRGRMDRALEILIETPPDVFNHNLETAPRLYKLARPGADYKWSLELLRRFKEAHPEIKTKSGLMVGLGEEISEIEEVLRDLRAHNVDMLTVGQYLQPSKHHLPVKRYVPPAEFDALKAYADEIGFTHAASGPFVRSSYHADQQAAGKEVK</sequence>
<comment type="function">
    <text evidence="1">Catalyzes the radical-mediated insertion of two sulfur atoms into the C-6 and C-8 positions of the octanoyl moiety bound to the lipoyl domains of lipoate-dependent enzymes, thereby converting the octanoylated domains into lipoylated derivatives.</text>
</comment>
<comment type="catalytic activity">
    <reaction evidence="1">
        <text>[[Fe-S] cluster scaffold protein carrying a second [4Fe-4S](2+) cluster] + N(6)-octanoyl-L-lysyl-[protein] + 2 oxidized [2Fe-2S]-[ferredoxin] + 2 S-adenosyl-L-methionine + 4 H(+) = [[Fe-S] cluster scaffold protein] + N(6)-[(R)-dihydrolipoyl]-L-lysyl-[protein] + 4 Fe(3+) + 2 hydrogen sulfide + 2 5'-deoxyadenosine + 2 L-methionine + 2 reduced [2Fe-2S]-[ferredoxin]</text>
        <dbReference type="Rhea" id="RHEA:16585"/>
        <dbReference type="Rhea" id="RHEA-COMP:9928"/>
        <dbReference type="Rhea" id="RHEA-COMP:10000"/>
        <dbReference type="Rhea" id="RHEA-COMP:10001"/>
        <dbReference type="Rhea" id="RHEA-COMP:10475"/>
        <dbReference type="Rhea" id="RHEA-COMP:14568"/>
        <dbReference type="Rhea" id="RHEA-COMP:14569"/>
        <dbReference type="ChEBI" id="CHEBI:15378"/>
        <dbReference type="ChEBI" id="CHEBI:17319"/>
        <dbReference type="ChEBI" id="CHEBI:29034"/>
        <dbReference type="ChEBI" id="CHEBI:29919"/>
        <dbReference type="ChEBI" id="CHEBI:33722"/>
        <dbReference type="ChEBI" id="CHEBI:33737"/>
        <dbReference type="ChEBI" id="CHEBI:33738"/>
        <dbReference type="ChEBI" id="CHEBI:57844"/>
        <dbReference type="ChEBI" id="CHEBI:59789"/>
        <dbReference type="ChEBI" id="CHEBI:78809"/>
        <dbReference type="ChEBI" id="CHEBI:83100"/>
        <dbReference type="EC" id="2.8.1.8"/>
    </reaction>
</comment>
<comment type="cofactor">
    <cofactor evidence="1">
        <name>[4Fe-4S] cluster</name>
        <dbReference type="ChEBI" id="CHEBI:49883"/>
    </cofactor>
    <text evidence="1">Binds 2 [4Fe-4S] clusters per subunit. One cluster is coordinated with 3 cysteines and an exchangeable S-adenosyl-L-methionine.</text>
</comment>
<comment type="pathway">
    <text evidence="1">Protein modification; protein lipoylation via endogenous pathway; protein N(6)-(lipoyl)lysine from octanoyl-[acyl-carrier-protein]: step 2/2.</text>
</comment>
<comment type="subcellular location">
    <subcellularLocation>
        <location evidence="1">Cytoplasm</location>
    </subcellularLocation>
</comment>
<comment type="similarity">
    <text evidence="1">Belongs to the radical SAM superfamily. Lipoyl synthase family.</text>
</comment>
<proteinExistence type="inferred from homology"/>
<dbReference type="EC" id="2.8.1.8" evidence="1"/>
<dbReference type="EMBL" id="CR954246">
    <property type="protein sequence ID" value="CAI86097.1"/>
    <property type="molecule type" value="Genomic_DNA"/>
</dbReference>
<dbReference type="SMR" id="Q3IJ81"/>
<dbReference type="STRING" id="326442.PSHAa1019"/>
<dbReference type="KEGG" id="pha:PSHAa1019"/>
<dbReference type="PATRIC" id="fig|326442.8.peg.979"/>
<dbReference type="eggNOG" id="COG0320">
    <property type="taxonomic scope" value="Bacteria"/>
</dbReference>
<dbReference type="HOGENOM" id="CLU_033144_2_1_6"/>
<dbReference type="BioCyc" id="PHAL326442:PSHA_RS04980-MONOMER"/>
<dbReference type="UniPathway" id="UPA00538">
    <property type="reaction ID" value="UER00593"/>
</dbReference>
<dbReference type="Proteomes" id="UP000006843">
    <property type="component" value="Chromosome I"/>
</dbReference>
<dbReference type="GO" id="GO:0005737">
    <property type="term" value="C:cytoplasm"/>
    <property type="evidence" value="ECO:0007669"/>
    <property type="project" value="UniProtKB-SubCell"/>
</dbReference>
<dbReference type="GO" id="GO:0051539">
    <property type="term" value="F:4 iron, 4 sulfur cluster binding"/>
    <property type="evidence" value="ECO:0007669"/>
    <property type="project" value="UniProtKB-UniRule"/>
</dbReference>
<dbReference type="GO" id="GO:0016992">
    <property type="term" value="F:lipoate synthase activity"/>
    <property type="evidence" value="ECO:0007669"/>
    <property type="project" value="UniProtKB-UniRule"/>
</dbReference>
<dbReference type="GO" id="GO:0046872">
    <property type="term" value="F:metal ion binding"/>
    <property type="evidence" value="ECO:0007669"/>
    <property type="project" value="UniProtKB-KW"/>
</dbReference>
<dbReference type="CDD" id="cd01335">
    <property type="entry name" value="Radical_SAM"/>
    <property type="match status" value="1"/>
</dbReference>
<dbReference type="FunFam" id="3.20.20.70:FF:000023">
    <property type="entry name" value="Lipoyl synthase"/>
    <property type="match status" value="1"/>
</dbReference>
<dbReference type="Gene3D" id="3.20.20.70">
    <property type="entry name" value="Aldolase class I"/>
    <property type="match status" value="1"/>
</dbReference>
<dbReference type="HAMAP" id="MF_00206">
    <property type="entry name" value="Lipoyl_synth"/>
    <property type="match status" value="1"/>
</dbReference>
<dbReference type="InterPro" id="IPR013785">
    <property type="entry name" value="Aldolase_TIM"/>
</dbReference>
<dbReference type="InterPro" id="IPR006638">
    <property type="entry name" value="Elp3/MiaA/NifB-like_rSAM"/>
</dbReference>
<dbReference type="InterPro" id="IPR031691">
    <property type="entry name" value="LIAS_N"/>
</dbReference>
<dbReference type="InterPro" id="IPR003698">
    <property type="entry name" value="Lipoyl_synth"/>
</dbReference>
<dbReference type="InterPro" id="IPR007197">
    <property type="entry name" value="rSAM"/>
</dbReference>
<dbReference type="NCBIfam" id="TIGR00510">
    <property type="entry name" value="lipA"/>
    <property type="match status" value="1"/>
</dbReference>
<dbReference type="NCBIfam" id="NF004019">
    <property type="entry name" value="PRK05481.1"/>
    <property type="match status" value="1"/>
</dbReference>
<dbReference type="NCBIfam" id="NF009544">
    <property type="entry name" value="PRK12928.1"/>
    <property type="match status" value="1"/>
</dbReference>
<dbReference type="PANTHER" id="PTHR10949">
    <property type="entry name" value="LIPOYL SYNTHASE"/>
    <property type="match status" value="1"/>
</dbReference>
<dbReference type="PANTHER" id="PTHR10949:SF0">
    <property type="entry name" value="LIPOYL SYNTHASE, MITOCHONDRIAL"/>
    <property type="match status" value="1"/>
</dbReference>
<dbReference type="Pfam" id="PF16881">
    <property type="entry name" value="LIAS_N"/>
    <property type="match status" value="1"/>
</dbReference>
<dbReference type="Pfam" id="PF04055">
    <property type="entry name" value="Radical_SAM"/>
    <property type="match status" value="1"/>
</dbReference>
<dbReference type="PIRSF" id="PIRSF005963">
    <property type="entry name" value="Lipoyl_synth"/>
    <property type="match status" value="1"/>
</dbReference>
<dbReference type="SFLD" id="SFLDF00271">
    <property type="entry name" value="lipoyl_synthase"/>
    <property type="match status" value="1"/>
</dbReference>
<dbReference type="SFLD" id="SFLDG01058">
    <property type="entry name" value="lipoyl_synthase_like"/>
    <property type="match status" value="1"/>
</dbReference>
<dbReference type="SMART" id="SM00729">
    <property type="entry name" value="Elp3"/>
    <property type="match status" value="1"/>
</dbReference>
<dbReference type="SUPFAM" id="SSF102114">
    <property type="entry name" value="Radical SAM enzymes"/>
    <property type="match status" value="1"/>
</dbReference>
<dbReference type="PROSITE" id="PS51918">
    <property type="entry name" value="RADICAL_SAM"/>
    <property type="match status" value="1"/>
</dbReference>
<gene>
    <name evidence="1" type="primary">lipA</name>
    <name type="ordered locus">PSHAa1019</name>
</gene>
<accession>Q3IJ81</accession>
<protein>
    <recommendedName>
        <fullName evidence="1">Lipoyl synthase</fullName>
        <ecNumber evidence="1">2.8.1.8</ecNumber>
    </recommendedName>
    <alternativeName>
        <fullName evidence="1">Lip-syn</fullName>
        <shortName evidence="1">LS</shortName>
    </alternativeName>
    <alternativeName>
        <fullName evidence="1">Lipoate synthase</fullName>
    </alternativeName>
    <alternativeName>
        <fullName evidence="1">Lipoic acid synthase</fullName>
    </alternativeName>
    <alternativeName>
        <fullName evidence="1">Sulfur insertion protein LipA</fullName>
    </alternativeName>
</protein>
<evidence type="ECO:0000255" key="1">
    <source>
        <dbReference type="HAMAP-Rule" id="MF_00206"/>
    </source>
</evidence>
<evidence type="ECO:0000255" key="2">
    <source>
        <dbReference type="PROSITE-ProRule" id="PRU01266"/>
    </source>
</evidence>
<name>LIPA_PSET1</name>
<reference key="1">
    <citation type="journal article" date="2005" name="Genome Res.">
        <title>Coping with cold: the genome of the versatile marine Antarctica bacterium Pseudoalteromonas haloplanktis TAC125.</title>
        <authorList>
            <person name="Medigue C."/>
            <person name="Krin E."/>
            <person name="Pascal G."/>
            <person name="Barbe V."/>
            <person name="Bernsel A."/>
            <person name="Bertin P.N."/>
            <person name="Cheung F."/>
            <person name="Cruveiller S."/>
            <person name="D'Amico S."/>
            <person name="Duilio A."/>
            <person name="Fang G."/>
            <person name="Feller G."/>
            <person name="Ho C."/>
            <person name="Mangenot S."/>
            <person name="Marino G."/>
            <person name="Nilsson J."/>
            <person name="Parrilli E."/>
            <person name="Rocha E.P.C."/>
            <person name="Rouy Z."/>
            <person name="Sekowska A."/>
            <person name="Tutino M.L."/>
            <person name="Vallenet D."/>
            <person name="von Heijne G."/>
            <person name="Danchin A."/>
        </authorList>
    </citation>
    <scope>NUCLEOTIDE SEQUENCE [LARGE SCALE GENOMIC DNA]</scope>
    <source>
        <strain>TAC 125</strain>
    </source>
</reference>
<feature type="chain" id="PRO_1000012257" description="Lipoyl synthase">
    <location>
        <begin position="1"/>
        <end position="321"/>
    </location>
</feature>
<feature type="domain" description="Radical SAM core" evidence="2">
    <location>
        <begin position="80"/>
        <end position="297"/>
    </location>
</feature>
<feature type="binding site" evidence="1">
    <location>
        <position position="68"/>
    </location>
    <ligand>
        <name>[4Fe-4S] cluster</name>
        <dbReference type="ChEBI" id="CHEBI:49883"/>
        <label>1</label>
    </ligand>
</feature>
<feature type="binding site" evidence="1">
    <location>
        <position position="73"/>
    </location>
    <ligand>
        <name>[4Fe-4S] cluster</name>
        <dbReference type="ChEBI" id="CHEBI:49883"/>
        <label>1</label>
    </ligand>
</feature>
<feature type="binding site" evidence="1">
    <location>
        <position position="79"/>
    </location>
    <ligand>
        <name>[4Fe-4S] cluster</name>
        <dbReference type="ChEBI" id="CHEBI:49883"/>
        <label>1</label>
    </ligand>
</feature>
<feature type="binding site" evidence="1">
    <location>
        <position position="94"/>
    </location>
    <ligand>
        <name>[4Fe-4S] cluster</name>
        <dbReference type="ChEBI" id="CHEBI:49883"/>
        <label>2</label>
        <note>4Fe-4S-S-AdoMet</note>
    </ligand>
</feature>
<feature type="binding site" evidence="1">
    <location>
        <position position="98"/>
    </location>
    <ligand>
        <name>[4Fe-4S] cluster</name>
        <dbReference type="ChEBI" id="CHEBI:49883"/>
        <label>2</label>
        <note>4Fe-4S-S-AdoMet</note>
    </ligand>
</feature>
<feature type="binding site" evidence="1">
    <location>
        <position position="101"/>
    </location>
    <ligand>
        <name>[4Fe-4S] cluster</name>
        <dbReference type="ChEBI" id="CHEBI:49883"/>
        <label>2</label>
        <note>4Fe-4S-S-AdoMet</note>
    </ligand>
</feature>
<feature type="binding site" evidence="1">
    <location>
        <position position="308"/>
    </location>
    <ligand>
        <name>[4Fe-4S] cluster</name>
        <dbReference type="ChEBI" id="CHEBI:49883"/>
        <label>1</label>
    </ligand>
</feature>